<name>RS18_KLEP7</name>
<evidence type="ECO:0000255" key="1">
    <source>
        <dbReference type="HAMAP-Rule" id="MF_00270"/>
    </source>
</evidence>
<evidence type="ECO:0000305" key="2"/>
<protein>
    <recommendedName>
        <fullName evidence="1">Small ribosomal subunit protein bS18</fullName>
    </recommendedName>
    <alternativeName>
        <fullName evidence="2">30S ribosomal protein S18</fullName>
    </alternativeName>
</protein>
<gene>
    <name evidence="1" type="primary">rpsR</name>
    <name type="ordered locus">KPN78578_45230</name>
    <name type="ORF">KPN_04596</name>
</gene>
<dbReference type="EMBL" id="CP000647">
    <property type="protein sequence ID" value="ABR79947.1"/>
    <property type="molecule type" value="Genomic_DNA"/>
</dbReference>
<dbReference type="RefSeq" id="WP_000135199.1">
    <property type="nucleotide sequence ID" value="NC_009648.1"/>
</dbReference>
<dbReference type="SMR" id="A6THB3"/>
<dbReference type="STRING" id="272620.KPN_04596"/>
<dbReference type="jPOST" id="A6THB3"/>
<dbReference type="PaxDb" id="272620-KPN_04596"/>
<dbReference type="EnsemblBacteria" id="ABR79947">
    <property type="protein sequence ID" value="ABR79947"/>
    <property type="gene ID" value="KPN_04596"/>
</dbReference>
<dbReference type="GeneID" id="98186237"/>
<dbReference type="KEGG" id="kpn:KPN_04596"/>
<dbReference type="HOGENOM" id="CLU_148710_2_3_6"/>
<dbReference type="Proteomes" id="UP000000265">
    <property type="component" value="Chromosome"/>
</dbReference>
<dbReference type="GO" id="GO:0022627">
    <property type="term" value="C:cytosolic small ribosomal subunit"/>
    <property type="evidence" value="ECO:0007669"/>
    <property type="project" value="TreeGrafter"/>
</dbReference>
<dbReference type="GO" id="GO:0070181">
    <property type="term" value="F:small ribosomal subunit rRNA binding"/>
    <property type="evidence" value="ECO:0007669"/>
    <property type="project" value="TreeGrafter"/>
</dbReference>
<dbReference type="GO" id="GO:0003735">
    <property type="term" value="F:structural constituent of ribosome"/>
    <property type="evidence" value="ECO:0007669"/>
    <property type="project" value="InterPro"/>
</dbReference>
<dbReference type="GO" id="GO:0006412">
    <property type="term" value="P:translation"/>
    <property type="evidence" value="ECO:0007669"/>
    <property type="project" value="UniProtKB-UniRule"/>
</dbReference>
<dbReference type="FunFam" id="4.10.640.10:FF:000001">
    <property type="entry name" value="30S ribosomal protein S18"/>
    <property type="match status" value="1"/>
</dbReference>
<dbReference type="Gene3D" id="4.10.640.10">
    <property type="entry name" value="Ribosomal protein S18"/>
    <property type="match status" value="1"/>
</dbReference>
<dbReference type="HAMAP" id="MF_00270">
    <property type="entry name" value="Ribosomal_bS18"/>
    <property type="match status" value="1"/>
</dbReference>
<dbReference type="InterPro" id="IPR001648">
    <property type="entry name" value="Ribosomal_bS18"/>
</dbReference>
<dbReference type="InterPro" id="IPR018275">
    <property type="entry name" value="Ribosomal_bS18_CS"/>
</dbReference>
<dbReference type="InterPro" id="IPR036870">
    <property type="entry name" value="Ribosomal_bS18_sf"/>
</dbReference>
<dbReference type="NCBIfam" id="TIGR00165">
    <property type="entry name" value="S18"/>
    <property type="match status" value="1"/>
</dbReference>
<dbReference type="PANTHER" id="PTHR13479">
    <property type="entry name" value="30S RIBOSOMAL PROTEIN S18"/>
    <property type="match status" value="1"/>
</dbReference>
<dbReference type="PANTHER" id="PTHR13479:SF40">
    <property type="entry name" value="SMALL RIBOSOMAL SUBUNIT PROTEIN BS18M"/>
    <property type="match status" value="1"/>
</dbReference>
<dbReference type="Pfam" id="PF01084">
    <property type="entry name" value="Ribosomal_S18"/>
    <property type="match status" value="1"/>
</dbReference>
<dbReference type="PRINTS" id="PR00974">
    <property type="entry name" value="RIBOSOMALS18"/>
</dbReference>
<dbReference type="SUPFAM" id="SSF46911">
    <property type="entry name" value="Ribosomal protein S18"/>
    <property type="match status" value="1"/>
</dbReference>
<dbReference type="PROSITE" id="PS00057">
    <property type="entry name" value="RIBOSOMAL_S18"/>
    <property type="match status" value="1"/>
</dbReference>
<sequence>MARYFRRRKFCRFTAEGVQEIDYKDIATLKNYITESGKIVPSRITGTRAKYQRQLARAIKRARYLSLLPYTDRHQ</sequence>
<accession>A6THB3</accession>
<reference key="1">
    <citation type="submission" date="2006-09" db="EMBL/GenBank/DDBJ databases">
        <authorList>
            <consortium name="The Klebsiella pneumonia Genome Sequencing Project"/>
            <person name="McClelland M."/>
            <person name="Sanderson E.K."/>
            <person name="Spieth J."/>
            <person name="Clifton W.S."/>
            <person name="Latreille P."/>
            <person name="Sabo A."/>
            <person name="Pepin K."/>
            <person name="Bhonagiri V."/>
            <person name="Porwollik S."/>
            <person name="Ali J."/>
            <person name="Wilson R.K."/>
        </authorList>
    </citation>
    <scope>NUCLEOTIDE SEQUENCE [LARGE SCALE GENOMIC DNA]</scope>
    <source>
        <strain>ATCC 700721 / MGH 78578</strain>
    </source>
</reference>
<organism>
    <name type="scientific">Klebsiella pneumoniae subsp. pneumoniae (strain ATCC 700721 / MGH 78578)</name>
    <dbReference type="NCBI Taxonomy" id="272620"/>
    <lineage>
        <taxon>Bacteria</taxon>
        <taxon>Pseudomonadati</taxon>
        <taxon>Pseudomonadota</taxon>
        <taxon>Gammaproteobacteria</taxon>
        <taxon>Enterobacterales</taxon>
        <taxon>Enterobacteriaceae</taxon>
        <taxon>Klebsiella/Raoultella group</taxon>
        <taxon>Klebsiella</taxon>
        <taxon>Klebsiella pneumoniae complex</taxon>
    </lineage>
</organism>
<feature type="chain" id="PRO_1000003512" description="Small ribosomal subunit protein bS18">
    <location>
        <begin position="1"/>
        <end position="75"/>
    </location>
</feature>
<keyword id="KW-0687">Ribonucleoprotein</keyword>
<keyword id="KW-0689">Ribosomal protein</keyword>
<keyword id="KW-0694">RNA-binding</keyword>
<keyword id="KW-0699">rRNA-binding</keyword>
<comment type="function">
    <text evidence="1">Binds as a heterodimer with protein bS6 to the central domain of the 16S rRNA, where it helps stabilize the platform of the 30S subunit.</text>
</comment>
<comment type="subunit">
    <text evidence="1">Part of the 30S ribosomal subunit. Forms a tight heterodimer with protein bS6.</text>
</comment>
<comment type="similarity">
    <text evidence="1">Belongs to the bacterial ribosomal protein bS18 family.</text>
</comment>
<proteinExistence type="inferred from homology"/>